<reference key="1">
    <citation type="submission" date="2005-07" db="EMBL/GenBank/DDBJ databases">
        <title>Complete sequence of Synechococcus sp. CC9605.</title>
        <authorList>
            <consortium name="US DOE Joint Genome Institute"/>
            <person name="Copeland A."/>
            <person name="Lucas S."/>
            <person name="Lapidus A."/>
            <person name="Barry K."/>
            <person name="Detter J.C."/>
            <person name="Glavina T."/>
            <person name="Hammon N."/>
            <person name="Israni S."/>
            <person name="Pitluck S."/>
            <person name="Schmutz J."/>
            <person name="Martinez M."/>
            <person name="Larimer F."/>
            <person name="Land M."/>
            <person name="Kyrpides N."/>
            <person name="Ivanova N."/>
            <person name="Richardson P."/>
        </authorList>
    </citation>
    <scope>NUCLEOTIDE SEQUENCE [LARGE SCALE GENOMIC DNA]</scope>
    <source>
        <strain>CC9605</strain>
    </source>
</reference>
<evidence type="ECO:0000255" key="1">
    <source>
        <dbReference type="HAMAP-Rule" id="MF_00406"/>
    </source>
</evidence>
<gene>
    <name evidence="1" type="primary">fabZ</name>
    <name type="ordered locus">Syncc9605_2117</name>
</gene>
<name>FABZ_SYNSC</name>
<accession>Q3AHS6</accession>
<organism>
    <name type="scientific">Synechococcus sp. (strain CC9605)</name>
    <dbReference type="NCBI Taxonomy" id="110662"/>
    <lineage>
        <taxon>Bacteria</taxon>
        <taxon>Bacillati</taxon>
        <taxon>Cyanobacteriota</taxon>
        <taxon>Cyanophyceae</taxon>
        <taxon>Synechococcales</taxon>
        <taxon>Synechococcaceae</taxon>
        <taxon>Synechococcus</taxon>
    </lineage>
</organism>
<keyword id="KW-0963">Cytoplasm</keyword>
<keyword id="KW-0441">Lipid A biosynthesis</keyword>
<keyword id="KW-0444">Lipid biosynthesis</keyword>
<keyword id="KW-0443">Lipid metabolism</keyword>
<keyword id="KW-0456">Lyase</keyword>
<dbReference type="EC" id="4.2.1.59" evidence="1"/>
<dbReference type="EMBL" id="CP000110">
    <property type="protein sequence ID" value="ABB35856.1"/>
    <property type="molecule type" value="Genomic_DNA"/>
</dbReference>
<dbReference type="RefSeq" id="WP_011365064.1">
    <property type="nucleotide sequence ID" value="NC_007516.1"/>
</dbReference>
<dbReference type="SMR" id="Q3AHS6"/>
<dbReference type="STRING" id="110662.Syncc9605_2117"/>
<dbReference type="KEGG" id="syd:Syncc9605_2117"/>
<dbReference type="eggNOG" id="COG0764">
    <property type="taxonomic scope" value="Bacteria"/>
</dbReference>
<dbReference type="HOGENOM" id="CLU_078912_3_0_3"/>
<dbReference type="OrthoDB" id="9772788at2"/>
<dbReference type="GO" id="GO:0005737">
    <property type="term" value="C:cytoplasm"/>
    <property type="evidence" value="ECO:0007669"/>
    <property type="project" value="UniProtKB-SubCell"/>
</dbReference>
<dbReference type="GO" id="GO:0016020">
    <property type="term" value="C:membrane"/>
    <property type="evidence" value="ECO:0007669"/>
    <property type="project" value="GOC"/>
</dbReference>
<dbReference type="GO" id="GO:0019171">
    <property type="term" value="F:(3R)-hydroxyacyl-[acyl-carrier-protein] dehydratase activity"/>
    <property type="evidence" value="ECO:0007669"/>
    <property type="project" value="UniProtKB-EC"/>
</dbReference>
<dbReference type="GO" id="GO:0006633">
    <property type="term" value="P:fatty acid biosynthetic process"/>
    <property type="evidence" value="ECO:0007669"/>
    <property type="project" value="UniProtKB-UniRule"/>
</dbReference>
<dbReference type="GO" id="GO:0009245">
    <property type="term" value="P:lipid A biosynthetic process"/>
    <property type="evidence" value="ECO:0007669"/>
    <property type="project" value="UniProtKB-UniRule"/>
</dbReference>
<dbReference type="CDD" id="cd01288">
    <property type="entry name" value="FabZ"/>
    <property type="match status" value="1"/>
</dbReference>
<dbReference type="FunFam" id="3.10.129.10:FF:000001">
    <property type="entry name" value="3-hydroxyacyl-[acyl-carrier-protein] dehydratase FabZ"/>
    <property type="match status" value="1"/>
</dbReference>
<dbReference type="Gene3D" id="3.10.129.10">
    <property type="entry name" value="Hotdog Thioesterase"/>
    <property type="match status" value="1"/>
</dbReference>
<dbReference type="HAMAP" id="MF_00406">
    <property type="entry name" value="FabZ"/>
    <property type="match status" value="1"/>
</dbReference>
<dbReference type="InterPro" id="IPR013114">
    <property type="entry name" value="FabA_FabZ"/>
</dbReference>
<dbReference type="InterPro" id="IPR010084">
    <property type="entry name" value="FabZ"/>
</dbReference>
<dbReference type="InterPro" id="IPR029069">
    <property type="entry name" value="HotDog_dom_sf"/>
</dbReference>
<dbReference type="NCBIfam" id="TIGR01750">
    <property type="entry name" value="fabZ"/>
    <property type="match status" value="1"/>
</dbReference>
<dbReference type="NCBIfam" id="NF000582">
    <property type="entry name" value="PRK00006.1"/>
    <property type="match status" value="1"/>
</dbReference>
<dbReference type="PANTHER" id="PTHR30272">
    <property type="entry name" value="3-HYDROXYACYL-[ACYL-CARRIER-PROTEIN] DEHYDRATASE"/>
    <property type="match status" value="1"/>
</dbReference>
<dbReference type="PANTHER" id="PTHR30272:SF1">
    <property type="entry name" value="3-HYDROXYACYL-[ACYL-CARRIER-PROTEIN] DEHYDRATASE"/>
    <property type="match status" value="1"/>
</dbReference>
<dbReference type="Pfam" id="PF07977">
    <property type="entry name" value="FabA"/>
    <property type="match status" value="1"/>
</dbReference>
<dbReference type="SUPFAM" id="SSF54637">
    <property type="entry name" value="Thioesterase/thiol ester dehydrase-isomerase"/>
    <property type="match status" value="1"/>
</dbReference>
<sequence length="151" mass="16401">MTESTTSDVVLTSEQIAGLLPHRYPFALVDRVIAHDPGVSATAIKNVTMNEPQFQGHFPERPLMPGVLIVEAMAQVGGLIVTQMPDLPKGLFVFAGIDGVRFRRPVVPGDQLVIRCELLSLKRKRFGKVKAEATVDGDLACSGELMFSLVD</sequence>
<feature type="chain" id="PRO_0000242903" description="3-hydroxyacyl-[acyl-carrier-protein] dehydratase FabZ">
    <location>
        <begin position="1"/>
        <end position="151"/>
    </location>
</feature>
<feature type="active site" evidence="1">
    <location>
        <position position="57"/>
    </location>
</feature>
<proteinExistence type="inferred from homology"/>
<protein>
    <recommendedName>
        <fullName evidence="1">3-hydroxyacyl-[acyl-carrier-protein] dehydratase FabZ</fullName>
        <ecNumber evidence="1">4.2.1.59</ecNumber>
    </recommendedName>
    <alternativeName>
        <fullName evidence="1">(3R)-hydroxymyristoyl-[acyl-carrier-protein] dehydratase</fullName>
        <shortName evidence="1">(3R)-hydroxymyristoyl-ACP dehydrase</shortName>
    </alternativeName>
    <alternativeName>
        <fullName evidence="1">Beta-hydroxyacyl-ACP dehydratase</fullName>
    </alternativeName>
</protein>
<comment type="function">
    <text evidence="1">Involved in unsaturated fatty acids biosynthesis. Catalyzes the dehydration of short chain beta-hydroxyacyl-ACPs and long chain saturated and unsaturated beta-hydroxyacyl-ACPs.</text>
</comment>
<comment type="catalytic activity">
    <reaction evidence="1">
        <text>a (3R)-hydroxyacyl-[ACP] = a (2E)-enoyl-[ACP] + H2O</text>
        <dbReference type="Rhea" id="RHEA:13097"/>
        <dbReference type="Rhea" id="RHEA-COMP:9925"/>
        <dbReference type="Rhea" id="RHEA-COMP:9945"/>
        <dbReference type="ChEBI" id="CHEBI:15377"/>
        <dbReference type="ChEBI" id="CHEBI:78784"/>
        <dbReference type="ChEBI" id="CHEBI:78827"/>
        <dbReference type="EC" id="4.2.1.59"/>
    </reaction>
</comment>
<comment type="subcellular location">
    <subcellularLocation>
        <location evidence="1">Cytoplasm</location>
    </subcellularLocation>
</comment>
<comment type="similarity">
    <text evidence="1">Belongs to the thioester dehydratase family. FabZ subfamily.</text>
</comment>